<keyword id="KW-0025">Alternative splicing</keyword>
<keyword id="KW-0175">Coiled coil</keyword>
<keyword id="KW-0963">Cytoplasm</keyword>
<keyword id="KW-0206">Cytoskeleton</keyword>
<keyword id="KW-0597">Phosphoprotein</keyword>
<keyword id="KW-1185">Reference proteome</keyword>
<sequence>MAESSSDSDHVRYRDGLSRWATRSFQRGVGSHSTVDVTAKVNTITNTLQDTTRNLRHVDQMLGRYREYSTGQAGAVGQLKEDLEQSINQLRSQRLRRSSGGRSVSVTSLSASDLDGGAVTENLRFAPTSPLKDYDLQGIKRNRFRTGVRFVSETDDMVQLHTFHQSLRDLSSEQVRLGDDLNRELFRRSRSDAETKRVLEELTGKLNEVQKPDVVSDRVERRLQEIEREMRLERELVERRHDQLGLVSLKLQEALKKQEAKADENEDVIKRKLRQSETEKSQLEQELEISRRLLSQSESNRETLLHQVEELRTQLIKAEGDQRGLQHQVPCISKQPLSHQDDQGDDRRFRRGVEREKLSLEKQMADLRVQLNFNSMASELEEVKRCMERKDQEKATLAAQIENLTRDLENREKQQLQMLDQLTEIQNHFETCEANRKRTDLQLSELSQHAEEATKQAEHYLSEFQRSETLREEAEKRREDLKAKAQESIRQWKLKHKKLERSMEKQAETLVQLTEKNNQFIKERDELKSQLCAALQQIENLRKELNDVLSKRALQEEELHCKEKKLNDIESHQAELELEVKNSLDTIHRLENELKRQSKSQSQIKAEKIHLEEEITELKKSQSQDKVKLLEMQESIKDLSAIRADLANKLAEEEKAKKAVFRDLSELTAQVKSKEEETATAITQLKLERDVHQRELEDLSSSLESVKLKHEQNIQELMKHFKKEKSEAESHIRMLKAESLEDKNMAKAHLGQLEKLKSQCEKLTEELTHTENENKKLKLKYQSLKEELDKKEKYISTEEEHLRRMEESRLHLKDQLLCLETEQESILGVIGKEIDEACKTFSRDSLEKLKVLTSGPQLHYDPHRWLAESKTKLQWLCEELKERESRERSMRQQLAACRQELRELTEHKESELLCLFEHIERQEQLLEEFHQEKRGLLEETQRKDEEVETLQDRVNALQMSTRVALDHLESVPEKLSLLEDFKDFRGASSLSEKTDGRYSKYSLHGDSVQQRRDDTKPRIKSFRDDRPLSAGSHAHGLDHSSSCQDHSRFLSSPQFSHSLPVFTKRTIATDPASIEGDTTSLPANGTSPQSKKEEHEIKKYKK</sequence>
<protein>
    <recommendedName>
        <fullName>Centrosomal protein of 128 kDa</fullName>
        <shortName>Cep128</shortName>
    </recommendedName>
</protein>
<name>CE128_MOUSE</name>
<reference key="1">
    <citation type="journal article" date="2004" name="Genome Res.">
        <title>The status, quality, and expansion of the NIH full-length cDNA project: the Mammalian Gene Collection (MGC).</title>
        <authorList>
            <consortium name="The MGC Project Team"/>
        </authorList>
    </citation>
    <scope>NUCLEOTIDE SEQUENCE [LARGE SCALE MRNA] (ISOFORM 1)</scope>
</reference>
<reference key="2">
    <citation type="journal article" date="2005" name="Science">
        <title>The transcriptional landscape of the mammalian genome.</title>
        <authorList>
            <person name="Carninci P."/>
            <person name="Kasukawa T."/>
            <person name="Katayama S."/>
            <person name="Gough J."/>
            <person name="Frith M.C."/>
            <person name="Maeda N."/>
            <person name="Oyama R."/>
            <person name="Ravasi T."/>
            <person name="Lenhard B."/>
            <person name="Wells C."/>
            <person name="Kodzius R."/>
            <person name="Shimokawa K."/>
            <person name="Bajic V.B."/>
            <person name="Brenner S.E."/>
            <person name="Batalov S."/>
            <person name="Forrest A.R."/>
            <person name="Zavolan M."/>
            <person name="Davis M.J."/>
            <person name="Wilming L.G."/>
            <person name="Aidinis V."/>
            <person name="Allen J.E."/>
            <person name="Ambesi-Impiombato A."/>
            <person name="Apweiler R."/>
            <person name="Aturaliya R.N."/>
            <person name="Bailey T.L."/>
            <person name="Bansal M."/>
            <person name="Baxter L."/>
            <person name="Beisel K.W."/>
            <person name="Bersano T."/>
            <person name="Bono H."/>
            <person name="Chalk A.M."/>
            <person name="Chiu K.P."/>
            <person name="Choudhary V."/>
            <person name="Christoffels A."/>
            <person name="Clutterbuck D.R."/>
            <person name="Crowe M.L."/>
            <person name="Dalla E."/>
            <person name="Dalrymple B.P."/>
            <person name="de Bono B."/>
            <person name="Della Gatta G."/>
            <person name="di Bernardo D."/>
            <person name="Down T."/>
            <person name="Engstrom P."/>
            <person name="Fagiolini M."/>
            <person name="Faulkner G."/>
            <person name="Fletcher C.F."/>
            <person name="Fukushima T."/>
            <person name="Furuno M."/>
            <person name="Futaki S."/>
            <person name="Gariboldi M."/>
            <person name="Georgii-Hemming P."/>
            <person name="Gingeras T.R."/>
            <person name="Gojobori T."/>
            <person name="Green R.E."/>
            <person name="Gustincich S."/>
            <person name="Harbers M."/>
            <person name="Hayashi Y."/>
            <person name="Hensch T.K."/>
            <person name="Hirokawa N."/>
            <person name="Hill D."/>
            <person name="Huminiecki L."/>
            <person name="Iacono M."/>
            <person name="Ikeo K."/>
            <person name="Iwama A."/>
            <person name="Ishikawa T."/>
            <person name="Jakt M."/>
            <person name="Kanapin A."/>
            <person name="Katoh M."/>
            <person name="Kawasawa Y."/>
            <person name="Kelso J."/>
            <person name="Kitamura H."/>
            <person name="Kitano H."/>
            <person name="Kollias G."/>
            <person name="Krishnan S.P."/>
            <person name="Kruger A."/>
            <person name="Kummerfeld S.K."/>
            <person name="Kurochkin I.V."/>
            <person name="Lareau L.F."/>
            <person name="Lazarevic D."/>
            <person name="Lipovich L."/>
            <person name="Liu J."/>
            <person name="Liuni S."/>
            <person name="McWilliam S."/>
            <person name="Madan Babu M."/>
            <person name="Madera M."/>
            <person name="Marchionni L."/>
            <person name="Matsuda H."/>
            <person name="Matsuzawa S."/>
            <person name="Miki H."/>
            <person name="Mignone F."/>
            <person name="Miyake S."/>
            <person name="Morris K."/>
            <person name="Mottagui-Tabar S."/>
            <person name="Mulder N."/>
            <person name="Nakano N."/>
            <person name="Nakauchi H."/>
            <person name="Ng P."/>
            <person name="Nilsson R."/>
            <person name="Nishiguchi S."/>
            <person name="Nishikawa S."/>
            <person name="Nori F."/>
            <person name="Ohara O."/>
            <person name="Okazaki Y."/>
            <person name="Orlando V."/>
            <person name="Pang K.C."/>
            <person name="Pavan W.J."/>
            <person name="Pavesi G."/>
            <person name="Pesole G."/>
            <person name="Petrovsky N."/>
            <person name="Piazza S."/>
            <person name="Reed J."/>
            <person name="Reid J.F."/>
            <person name="Ring B.Z."/>
            <person name="Ringwald M."/>
            <person name="Rost B."/>
            <person name="Ruan Y."/>
            <person name="Salzberg S.L."/>
            <person name="Sandelin A."/>
            <person name="Schneider C."/>
            <person name="Schoenbach C."/>
            <person name="Sekiguchi K."/>
            <person name="Semple C.A."/>
            <person name="Seno S."/>
            <person name="Sessa L."/>
            <person name="Sheng Y."/>
            <person name="Shibata Y."/>
            <person name="Shimada H."/>
            <person name="Shimada K."/>
            <person name="Silva D."/>
            <person name="Sinclair B."/>
            <person name="Sperling S."/>
            <person name="Stupka E."/>
            <person name="Sugiura K."/>
            <person name="Sultana R."/>
            <person name="Takenaka Y."/>
            <person name="Taki K."/>
            <person name="Tammoja K."/>
            <person name="Tan S.L."/>
            <person name="Tang S."/>
            <person name="Taylor M.S."/>
            <person name="Tegner J."/>
            <person name="Teichmann S.A."/>
            <person name="Ueda H.R."/>
            <person name="van Nimwegen E."/>
            <person name="Verardo R."/>
            <person name="Wei C.L."/>
            <person name="Yagi K."/>
            <person name="Yamanishi H."/>
            <person name="Zabarovsky E."/>
            <person name="Zhu S."/>
            <person name="Zimmer A."/>
            <person name="Hide W."/>
            <person name="Bult C."/>
            <person name="Grimmond S.M."/>
            <person name="Teasdale R.D."/>
            <person name="Liu E.T."/>
            <person name="Brusic V."/>
            <person name="Quackenbush J."/>
            <person name="Wahlestedt C."/>
            <person name="Mattick J.S."/>
            <person name="Hume D.A."/>
            <person name="Kai C."/>
            <person name="Sasaki D."/>
            <person name="Tomaru Y."/>
            <person name="Fukuda S."/>
            <person name="Kanamori-Katayama M."/>
            <person name="Suzuki M."/>
            <person name="Aoki J."/>
            <person name="Arakawa T."/>
            <person name="Iida J."/>
            <person name="Imamura K."/>
            <person name="Itoh M."/>
            <person name="Kato T."/>
            <person name="Kawaji H."/>
            <person name="Kawagashira N."/>
            <person name="Kawashima T."/>
            <person name="Kojima M."/>
            <person name="Kondo S."/>
            <person name="Konno H."/>
            <person name="Nakano K."/>
            <person name="Ninomiya N."/>
            <person name="Nishio T."/>
            <person name="Okada M."/>
            <person name="Plessy C."/>
            <person name="Shibata K."/>
            <person name="Shiraki T."/>
            <person name="Suzuki S."/>
            <person name="Tagami M."/>
            <person name="Waki K."/>
            <person name="Watahiki A."/>
            <person name="Okamura-Oho Y."/>
            <person name="Suzuki H."/>
            <person name="Kawai J."/>
            <person name="Hayashizaki Y."/>
        </authorList>
    </citation>
    <scope>NUCLEOTIDE SEQUENCE [LARGE SCALE MRNA] OF 454-1102 (ISOFORM 2)</scope>
    <source>
        <strain>C57BL/6J</strain>
        <tissue>Testis</tissue>
    </source>
</reference>
<reference key="3">
    <citation type="journal article" date="2010" name="Cell">
        <title>A tissue-specific atlas of mouse protein phosphorylation and expression.</title>
        <authorList>
            <person name="Huttlin E.L."/>
            <person name="Jedrychowski M.P."/>
            <person name="Elias J.E."/>
            <person name="Goswami T."/>
            <person name="Rad R."/>
            <person name="Beausoleil S.A."/>
            <person name="Villen J."/>
            <person name="Haas W."/>
            <person name="Sowa M.E."/>
            <person name="Gygi S.P."/>
        </authorList>
    </citation>
    <scope>PHOSPHORYLATION [LARGE SCALE ANALYSIS] AT SER-248</scope>
    <scope>IDENTIFICATION BY MASS SPECTROMETRY [LARGE SCALE ANALYSIS]</scope>
    <source>
        <tissue>Spleen</tissue>
    </source>
</reference>
<organism>
    <name type="scientific">Mus musculus</name>
    <name type="common">Mouse</name>
    <dbReference type="NCBI Taxonomy" id="10090"/>
    <lineage>
        <taxon>Eukaryota</taxon>
        <taxon>Metazoa</taxon>
        <taxon>Chordata</taxon>
        <taxon>Craniata</taxon>
        <taxon>Vertebrata</taxon>
        <taxon>Euteleostomi</taxon>
        <taxon>Mammalia</taxon>
        <taxon>Eutheria</taxon>
        <taxon>Euarchontoglires</taxon>
        <taxon>Glires</taxon>
        <taxon>Rodentia</taxon>
        <taxon>Myomorpha</taxon>
        <taxon>Muroidea</taxon>
        <taxon>Muridae</taxon>
        <taxon>Murinae</taxon>
        <taxon>Mus</taxon>
        <taxon>Mus</taxon>
    </lineage>
</organism>
<comment type="subcellular location">
    <subcellularLocation>
        <location evidence="1">Cytoplasm</location>
        <location evidence="1">Cytoskeleton</location>
        <location evidence="1">Microtubule organizing center</location>
        <location evidence="1">Centrosome</location>
        <location evidence="1">Centriole</location>
    </subcellularLocation>
    <subcellularLocation>
        <location evidence="1">Cytoplasm</location>
        <location evidence="1">Cytoskeleton</location>
        <location evidence="1">Spindle pole</location>
    </subcellularLocation>
    <text evidence="1">Associates with the mother centriole.</text>
</comment>
<comment type="alternative products">
    <event type="alternative splicing"/>
    <isoform>
        <id>Q8BI22-1</id>
        <name>1</name>
        <sequence type="displayed"/>
    </isoform>
    <isoform>
        <id>Q8BI22-2</id>
        <name>2</name>
        <sequence type="described" ref="VSP_030197 VSP_030198"/>
    </isoform>
</comment>
<comment type="sequence caution" evidence="6">
    <conflict type="erroneous initiation">
        <sequence resource="EMBL-CDS" id="BAC26523"/>
    </conflict>
    <text>Truncated N-terminus.</text>
</comment>
<evidence type="ECO:0000250" key="1"/>
<evidence type="ECO:0000250" key="2">
    <source>
        <dbReference type="UniProtKB" id="Q6ZU80"/>
    </source>
</evidence>
<evidence type="ECO:0000255" key="3"/>
<evidence type="ECO:0000256" key="4">
    <source>
        <dbReference type="SAM" id="MobiDB-lite"/>
    </source>
</evidence>
<evidence type="ECO:0000303" key="5">
    <source>
    </source>
</evidence>
<evidence type="ECO:0000305" key="6"/>
<evidence type="ECO:0007744" key="7">
    <source>
    </source>
</evidence>
<accession>Q8BI22</accession>
<feature type="chain" id="PRO_0000089947" description="Centrosomal protein of 128 kDa">
    <location>
        <begin position="1"/>
        <end position="1102"/>
    </location>
</feature>
<feature type="region of interest" description="Disordered" evidence="4">
    <location>
        <begin position="326"/>
        <end position="346"/>
    </location>
</feature>
<feature type="region of interest" description="Disordered" evidence="4">
    <location>
        <begin position="991"/>
        <end position="1048"/>
    </location>
</feature>
<feature type="region of interest" description="Disordered" evidence="4">
    <location>
        <begin position="1070"/>
        <end position="1102"/>
    </location>
</feature>
<feature type="coiled-coil region" evidence="3">
    <location>
        <begin position="215"/>
        <end position="822"/>
    </location>
</feature>
<feature type="coiled-coil region" evidence="3">
    <location>
        <begin position="878"/>
        <end position="959"/>
    </location>
</feature>
<feature type="compositionally biased region" description="Basic and acidic residues" evidence="4">
    <location>
        <begin position="1009"/>
        <end position="1027"/>
    </location>
</feature>
<feature type="compositionally biased region" description="Polar residues" evidence="4">
    <location>
        <begin position="1039"/>
        <end position="1048"/>
    </location>
</feature>
<feature type="compositionally biased region" description="Polar residues" evidence="4">
    <location>
        <begin position="1076"/>
        <end position="1089"/>
    </location>
</feature>
<feature type="compositionally biased region" description="Basic and acidic residues" evidence="4">
    <location>
        <begin position="1090"/>
        <end position="1102"/>
    </location>
</feature>
<feature type="modified residue" description="Phosphoserine" evidence="2">
    <location>
        <position position="31"/>
    </location>
</feature>
<feature type="modified residue" description="Phosphoserine" evidence="7">
    <location>
        <position position="248"/>
    </location>
</feature>
<feature type="modified residue" description="Phosphoserine" evidence="2">
    <location>
        <position position="290"/>
    </location>
</feature>
<feature type="splice variant" id="VSP_030197" description="In isoform 2." evidence="5">
    <original>DDR</original>
    <variation>VST</variation>
    <location>
        <begin position="1024"/>
        <end position="1026"/>
    </location>
</feature>
<feature type="splice variant" id="VSP_030198" description="In isoform 2." evidence="5">
    <location>
        <begin position="1027"/>
        <end position="1102"/>
    </location>
</feature>
<dbReference type="EMBL" id="BC079647">
    <property type="status" value="NOT_ANNOTATED_CDS"/>
    <property type="molecule type" value="mRNA"/>
</dbReference>
<dbReference type="EMBL" id="AK029581">
    <property type="protein sequence ID" value="BAC26523.1"/>
    <property type="status" value="ALT_INIT"/>
    <property type="molecule type" value="mRNA"/>
</dbReference>
<dbReference type="CCDS" id="CCDS36515.2">
    <molecule id="Q8BI22-1"/>
</dbReference>
<dbReference type="RefSeq" id="NP_861536.3">
    <molecule id="Q8BI22-1"/>
    <property type="nucleotide sequence ID" value="NM_181815.3"/>
</dbReference>
<dbReference type="SMR" id="Q8BI22"/>
<dbReference type="BioGRID" id="217309">
    <property type="interactions" value="1"/>
</dbReference>
<dbReference type="FunCoup" id="Q8BI22">
    <property type="interactions" value="1260"/>
</dbReference>
<dbReference type="STRING" id="10090.ENSMUSP00000115679"/>
<dbReference type="GlyGen" id="Q8BI22">
    <property type="glycosylation" value="1 site, 1 O-linked glycan (1 site)"/>
</dbReference>
<dbReference type="iPTMnet" id="Q8BI22"/>
<dbReference type="PhosphoSitePlus" id="Q8BI22"/>
<dbReference type="SwissPalm" id="Q8BI22"/>
<dbReference type="jPOST" id="Q8BI22"/>
<dbReference type="PaxDb" id="10090-ENSMUSP00000115679"/>
<dbReference type="ProteomicsDB" id="280047">
    <molecule id="Q8BI22-1"/>
</dbReference>
<dbReference type="ProteomicsDB" id="280048">
    <molecule id="Q8BI22-2"/>
</dbReference>
<dbReference type="Pumba" id="Q8BI22"/>
<dbReference type="Antibodypedia" id="2">
    <property type="antibodies" value="88 antibodies from 14 providers"/>
</dbReference>
<dbReference type="Ensembl" id="ENSMUST00000141429.8">
    <molecule id="Q8BI22-1"/>
    <property type="protein sequence ID" value="ENSMUSP00000115679.2"/>
    <property type="gene ID" value="ENSMUSG00000061533.17"/>
</dbReference>
<dbReference type="GeneID" id="75216"/>
<dbReference type="KEGG" id="mmu:75216"/>
<dbReference type="UCSC" id="uc007okl.2">
    <molecule id="Q8BI22-1"/>
    <property type="organism name" value="mouse"/>
</dbReference>
<dbReference type="AGR" id="MGI:1922466"/>
<dbReference type="CTD" id="145508"/>
<dbReference type="MGI" id="MGI:1922466">
    <property type="gene designation" value="Cep128"/>
</dbReference>
<dbReference type="VEuPathDB" id="HostDB:ENSMUSG00000061533"/>
<dbReference type="eggNOG" id="ENOG502QRR8">
    <property type="taxonomic scope" value="Eukaryota"/>
</dbReference>
<dbReference type="GeneTree" id="ENSGT00390000007020"/>
<dbReference type="HOGENOM" id="CLU_010570_0_0_1"/>
<dbReference type="InParanoid" id="Q8BI22"/>
<dbReference type="OMA" id="ITSTLQX"/>
<dbReference type="OrthoDB" id="10046318at2759"/>
<dbReference type="PhylomeDB" id="Q8BI22"/>
<dbReference type="TreeFam" id="TF331714"/>
<dbReference type="BioGRID-ORCS" id="75216">
    <property type="hits" value="2 hits in 76 CRISPR screens"/>
</dbReference>
<dbReference type="ChiTaRS" id="Cep128">
    <property type="organism name" value="mouse"/>
</dbReference>
<dbReference type="PRO" id="PR:Q8BI22"/>
<dbReference type="Proteomes" id="UP000000589">
    <property type="component" value="Chromosome 12"/>
</dbReference>
<dbReference type="RNAct" id="Q8BI22">
    <property type="molecule type" value="protein"/>
</dbReference>
<dbReference type="Bgee" id="ENSMUSG00000061533">
    <property type="expression patterns" value="Expressed in spermatid and 209 other cell types or tissues"/>
</dbReference>
<dbReference type="ExpressionAtlas" id="Q8BI22">
    <property type="expression patterns" value="baseline and differential"/>
</dbReference>
<dbReference type="GO" id="GO:0120103">
    <property type="term" value="C:centriolar subdistal appendage"/>
    <property type="evidence" value="ECO:0007669"/>
    <property type="project" value="Ensembl"/>
</dbReference>
<dbReference type="GO" id="GO:0005814">
    <property type="term" value="C:centriole"/>
    <property type="evidence" value="ECO:0000314"/>
    <property type="project" value="MGI"/>
</dbReference>
<dbReference type="GO" id="GO:0005813">
    <property type="term" value="C:centrosome"/>
    <property type="evidence" value="ECO:0007669"/>
    <property type="project" value="Ensembl"/>
</dbReference>
<dbReference type="GO" id="GO:0036064">
    <property type="term" value="C:ciliary basal body"/>
    <property type="evidence" value="ECO:0000266"/>
    <property type="project" value="MGI"/>
</dbReference>
<dbReference type="GO" id="GO:0005794">
    <property type="term" value="C:Golgi apparatus"/>
    <property type="evidence" value="ECO:0007669"/>
    <property type="project" value="Ensembl"/>
</dbReference>
<dbReference type="GO" id="GO:0031965">
    <property type="term" value="C:nuclear membrane"/>
    <property type="evidence" value="ECO:0007669"/>
    <property type="project" value="Ensembl"/>
</dbReference>
<dbReference type="GO" id="GO:0120212">
    <property type="term" value="C:sperm head-tail coupling apparatus"/>
    <property type="evidence" value="ECO:0000266"/>
    <property type="project" value="MGI"/>
</dbReference>
<dbReference type="GO" id="GO:0000922">
    <property type="term" value="C:spindle pole"/>
    <property type="evidence" value="ECO:0000250"/>
    <property type="project" value="UniProtKB"/>
</dbReference>
<dbReference type="GO" id="GO:0044458">
    <property type="term" value="P:motile cilium assembly"/>
    <property type="evidence" value="ECO:0000266"/>
    <property type="project" value="MGI"/>
</dbReference>
<dbReference type="GO" id="GO:0008104">
    <property type="term" value="P:protein localization"/>
    <property type="evidence" value="ECO:0007669"/>
    <property type="project" value="Ensembl"/>
</dbReference>
<dbReference type="GO" id="GO:0010468">
    <property type="term" value="P:regulation of gene expression"/>
    <property type="evidence" value="ECO:0000315"/>
    <property type="project" value="MGI"/>
</dbReference>
<dbReference type="GO" id="GO:0120316">
    <property type="term" value="P:sperm flagellum assembly"/>
    <property type="evidence" value="ECO:0000315"/>
    <property type="project" value="MGI"/>
</dbReference>
<dbReference type="GO" id="GO:0007283">
    <property type="term" value="P:spermatogenesis"/>
    <property type="evidence" value="ECO:0000315"/>
    <property type="project" value="MGI"/>
</dbReference>
<dbReference type="InterPro" id="IPR026652">
    <property type="entry name" value="CEP128"/>
</dbReference>
<dbReference type="PANTHER" id="PTHR46657">
    <property type="entry name" value="CENTROSOMAL PROTEIN OF 128 KDA"/>
    <property type="match status" value="1"/>
</dbReference>
<dbReference type="PANTHER" id="PTHR46657:SF1">
    <property type="entry name" value="CENTROSOMAL PROTEIN OF 128 KDA"/>
    <property type="match status" value="1"/>
</dbReference>
<gene>
    <name type="primary">Cep128</name>
</gene>
<proteinExistence type="evidence at protein level"/>